<sequence>MAKAKGNREKIKLVSTAKTGHFYTTEKNKRNMPEKMEIKKFDPVIRQHVIYKEAKIK</sequence>
<evidence type="ECO:0000255" key="1">
    <source>
        <dbReference type="HAMAP-Rule" id="MF_00294"/>
    </source>
</evidence>
<evidence type="ECO:0000305" key="2"/>
<feature type="chain" id="PRO_1000194063" description="Large ribosomal subunit protein bL33">
    <location>
        <begin position="1"/>
        <end position="57"/>
    </location>
</feature>
<keyword id="KW-0687">Ribonucleoprotein</keyword>
<keyword id="KW-0689">Ribosomal protein</keyword>
<reference key="1">
    <citation type="submission" date="2008-12" db="EMBL/GenBank/DDBJ databases">
        <title>Complete sequence of chromosome of Shewanella baltica OS223.</title>
        <authorList>
            <consortium name="US DOE Joint Genome Institute"/>
            <person name="Lucas S."/>
            <person name="Copeland A."/>
            <person name="Lapidus A."/>
            <person name="Glavina del Rio T."/>
            <person name="Dalin E."/>
            <person name="Tice H."/>
            <person name="Bruce D."/>
            <person name="Goodwin L."/>
            <person name="Pitluck S."/>
            <person name="Chertkov O."/>
            <person name="Meincke L."/>
            <person name="Brettin T."/>
            <person name="Detter J.C."/>
            <person name="Han C."/>
            <person name="Kuske C.R."/>
            <person name="Larimer F."/>
            <person name="Land M."/>
            <person name="Hauser L."/>
            <person name="Kyrpides N."/>
            <person name="Ovchinnikova G."/>
            <person name="Brettar I."/>
            <person name="Rodrigues J."/>
            <person name="Konstantinidis K."/>
            <person name="Tiedje J."/>
        </authorList>
    </citation>
    <scope>NUCLEOTIDE SEQUENCE [LARGE SCALE GENOMIC DNA]</scope>
    <source>
        <strain>OS223</strain>
    </source>
</reference>
<accession>B8E4J7</accession>
<name>RL33_SHEB2</name>
<protein>
    <recommendedName>
        <fullName evidence="1">Large ribosomal subunit protein bL33</fullName>
    </recommendedName>
    <alternativeName>
        <fullName evidence="2">50S ribosomal protein L33</fullName>
    </alternativeName>
</protein>
<proteinExistence type="inferred from homology"/>
<organism>
    <name type="scientific">Shewanella baltica (strain OS223)</name>
    <dbReference type="NCBI Taxonomy" id="407976"/>
    <lineage>
        <taxon>Bacteria</taxon>
        <taxon>Pseudomonadati</taxon>
        <taxon>Pseudomonadota</taxon>
        <taxon>Gammaproteobacteria</taxon>
        <taxon>Alteromonadales</taxon>
        <taxon>Shewanellaceae</taxon>
        <taxon>Shewanella</taxon>
    </lineage>
</organism>
<comment type="similarity">
    <text evidence="1">Belongs to the bacterial ribosomal protein bL33 family.</text>
</comment>
<dbReference type="EMBL" id="CP001252">
    <property type="protein sequence ID" value="ACK44938.1"/>
    <property type="molecule type" value="Genomic_DNA"/>
</dbReference>
<dbReference type="RefSeq" id="WP_006079871.1">
    <property type="nucleotide sequence ID" value="NC_011663.1"/>
</dbReference>
<dbReference type="SMR" id="B8E4J7"/>
<dbReference type="GeneID" id="94729699"/>
<dbReference type="KEGG" id="sbp:Sbal223_0404"/>
<dbReference type="HOGENOM" id="CLU_190949_1_1_6"/>
<dbReference type="Proteomes" id="UP000002507">
    <property type="component" value="Chromosome"/>
</dbReference>
<dbReference type="GO" id="GO:0022625">
    <property type="term" value="C:cytosolic large ribosomal subunit"/>
    <property type="evidence" value="ECO:0007669"/>
    <property type="project" value="TreeGrafter"/>
</dbReference>
<dbReference type="GO" id="GO:0003735">
    <property type="term" value="F:structural constituent of ribosome"/>
    <property type="evidence" value="ECO:0007669"/>
    <property type="project" value="InterPro"/>
</dbReference>
<dbReference type="GO" id="GO:0006412">
    <property type="term" value="P:translation"/>
    <property type="evidence" value="ECO:0007669"/>
    <property type="project" value="UniProtKB-UniRule"/>
</dbReference>
<dbReference type="FunFam" id="2.20.28.120:FF:000001">
    <property type="entry name" value="50S ribosomal protein L33"/>
    <property type="match status" value="1"/>
</dbReference>
<dbReference type="Gene3D" id="2.20.28.120">
    <property type="entry name" value="Ribosomal protein L33"/>
    <property type="match status" value="1"/>
</dbReference>
<dbReference type="HAMAP" id="MF_00294">
    <property type="entry name" value="Ribosomal_bL33"/>
    <property type="match status" value="1"/>
</dbReference>
<dbReference type="InterPro" id="IPR001705">
    <property type="entry name" value="Ribosomal_bL33"/>
</dbReference>
<dbReference type="InterPro" id="IPR018264">
    <property type="entry name" value="Ribosomal_bL33_CS"/>
</dbReference>
<dbReference type="InterPro" id="IPR038584">
    <property type="entry name" value="Ribosomal_bL33_sf"/>
</dbReference>
<dbReference type="InterPro" id="IPR011332">
    <property type="entry name" value="Ribosomal_zn-bd"/>
</dbReference>
<dbReference type="NCBIfam" id="NF001860">
    <property type="entry name" value="PRK00595.1"/>
    <property type="match status" value="1"/>
</dbReference>
<dbReference type="NCBIfam" id="TIGR01023">
    <property type="entry name" value="rpmG_bact"/>
    <property type="match status" value="1"/>
</dbReference>
<dbReference type="PANTHER" id="PTHR15238">
    <property type="entry name" value="54S RIBOSOMAL PROTEIN L39, MITOCHONDRIAL"/>
    <property type="match status" value="1"/>
</dbReference>
<dbReference type="PANTHER" id="PTHR15238:SF1">
    <property type="entry name" value="LARGE RIBOSOMAL SUBUNIT PROTEIN BL33M"/>
    <property type="match status" value="1"/>
</dbReference>
<dbReference type="Pfam" id="PF00471">
    <property type="entry name" value="Ribosomal_L33"/>
    <property type="match status" value="1"/>
</dbReference>
<dbReference type="SUPFAM" id="SSF57829">
    <property type="entry name" value="Zn-binding ribosomal proteins"/>
    <property type="match status" value="1"/>
</dbReference>
<dbReference type="PROSITE" id="PS00582">
    <property type="entry name" value="RIBOSOMAL_L33"/>
    <property type="match status" value="1"/>
</dbReference>
<gene>
    <name evidence="1" type="primary">rpmG</name>
    <name type="ordered locus">Sbal223_0404</name>
</gene>